<name>HIS8_PYRFU</name>
<sequence length="338" mass="39086">MIWEEILNFEPYRAVEGNYRIWLDKNESPYDLPPQLKEEILEELKRIEFNRYPHITSDPLREALAEFYGLKKENIAVGNGSDELINYLVKMFKGKYIVVTSPTFGMYSFFAKLHGIPVKDIPLKEDFTIDGERIAEEGKAASAIFIASPNNPTGNSQPENEVLKVLDSGRVVILDEAYSEFSGKSFIPKISEYENLVILRTFSKAFGLAGIRCGYMIANEKIIDALYRILPPYNLNSLTMTVAIKMLEHYDIVKRRIKLIVKERERIRREFIEYSYPSEANFLLMKLDAYDYLLKKGIVVRKLSGRLEGHIRVTIGKKWENDELIKALKEFLEECRCG</sequence>
<feature type="chain" id="PRO_0000153503" description="Histidinol-phosphate aminotransferase">
    <location>
        <begin position="1"/>
        <end position="338"/>
    </location>
</feature>
<feature type="modified residue" description="N6-(pyridoxal phosphate)lysine" evidence="1">
    <location>
        <position position="204"/>
    </location>
</feature>
<proteinExistence type="inferred from homology"/>
<reference key="1">
    <citation type="journal article" date="1999" name="Genetics">
        <title>Divergence of the hyperthermophilic archaea Pyrococcus furiosus and P. horikoshii inferred from complete genomic sequences.</title>
        <authorList>
            <person name="Maeder D.L."/>
            <person name="Weiss R.B."/>
            <person name="Dunn D.M."/>
            <person name="Cherry J.L."/>
            <person name="Gonzalez J.M."/>
            <person name="DiRuggiero J."/>
            <person name="Robb F.T."/>
        </authorList>
    </citation>
    <scope>NUCLEOTIDE SEQUENCE [LARGE SCALE GENOMIC DNA]</scope>
    <source>
        <strain>ATCC 43587 / DSM 3638 / JCM 8422 / Vc1</strain>
    </source>
</reference>
<protein>
    <recommendedName>
        <fullName evidence="1">Histidinol-phosphate aminotransferase</fullName>
        <ecNumber evidence="1">2.6.1.9</ecNumber>
    </recommendedName>
    <alternativeName>
        <fullName evidence="1">Imidazole acetol-phosphate transaminase</fullName>
    </alternativeName>
</protein>
<organism>
    <name type="scientific">Pyrococcus furiosus (strain ATCC 43587 / DSM 3638 / JCM 8422 / Vc1)</name>
    <dbReference type="NCBI Taxonomy" id="186497"/>
    <lineage>
        <taxon>Archaea</taxon>
        <taxon>Methanobacteriati</taxon>
        <taxon>Methanobacteriota</taxon>
        <taxon>Thermococci</taxon>
        <taxon>Thermococcales</taxon>
        <taxon>Thermococcaceae</taxon>
        <taxon>Pyrococcus</taxon>
    </lineage>
</organism>
<gene>
    <name evidence="1" type="primary">hisC</name>
    <name type="ordered locus">PF1665</name>
</gene>
<evidence type="ECO:0000255" key="1">
    <source>
        <dbReference type="HAMAP-Rule" id="MF_01023"/>
    </source>
</evidence>
<keyword id="KW-0028">Amino-acid biosynthesis</keyword>
<keyword id="KW-0032">Aminotransferase</keyword>
<keyword id="KW-0368">Histidine biosynthesis</keyword>
<keyword id="KW-0663">Pyridoxal phosphate</keyword>
<keyword id="KW-1185">Reference proteome</keyword>
<keyword id="KW-0808">Transferase</keyword>
<accession>Q8TH25</accession>
<comment type="catalytic activity">
    <reaction evidence="1">
        <text>L-histidinol phosphate + 2-oxoglutarate = 3-(imidazol-4-yl)-2-oxopropyl phosphate + L-glutamate</text>
        <dbReference type="Rhea" id="RHEA:23744"/>
        <dbReference type="ChEBI" id="CHEBI:16810"/>
        <dbReference type="ChEBI" id="CHEBI:29985"/>
        <dbReference type="ChEBI" id="CHEBI:57766"/>
        <dbReference type="ChEBI" id="CHEBI:57980"/>
        <dbReference type="EC" id="2.6.1.9"/>
    </reaction>
</comment>
<comment type="cofactor">
    <cofactor evidence="1">
        <name>pyridoxal 5'-phosphate</name>
        <dbReference type="ChEBI" id="CHEBI:597326"/>
    </cofactor>
</comment>
<comment type="pathway">
    <text evidence="1">Amino-acid biosynthesis; L-histidine biosynthesis; L-histidine from 5-phospho-alpha-D-ribose 1-diphosphate: step 7/9.</text>
</comment>
<comment type="similarity">
    <text evidence="1">Belongs to the class-II pyridoxal-phosphate-dependent aminotransferase family. Histidinol-phosphate aminotransferase subfamily.</text>
</comment>
<dbReference type="EC" id="2.6.1.9" evidence="1"/>
<dbReference type="EMBL" id="AE009950">
    <property type="protein sequence ID" value="AAL81789.1"/>
    <property type="molecule type" value="Genomic_DNA"/>
</dbReference>
<dbReference type="RefSeq" id="WP_011012811.1">
    <property type="nucleotide sequence ID" value="NZ_CP023154.1"/>
</dbReference>
<dbReference type="SMR" id="Q8TH25"/>
<dbReference type="STRING" id="186497.PF1665"/>
<dbReference type="PaxDb" id="186497-PF1665"/>
<dbReference type="GeneID" id="41713493"/>
<dbReference type="KEGG" id="pfu:PF1665"/>
<dbReference type="PATRIC" id="fig|186497.12.peg.1731"/>
<dbReference type="eggNOG" id="arCOG04273">
    <property type="taxonomic scope" value="Archaea"/>
</dbReference>
<dbReference type="HOGENOM" id="CLU_017584_3_1_2"/>
<dbReference type="OrthoDB" id="9929at2157"/>
<dbReference type="PhylomeDB" id="Q8TH25"/>
<dbReference type="UniPathway" id="UPA00031">
    <property type="reaction ID" value="UER00012"/>
</dbReference>
<dbReference type="Proteomes" id="UP000001013">
    <property type="component" value="Chromosome"/>
</dbReference>
<dbReference type="GO" id="GO:0004400">
    <property type="term" value="F:histidinol-phosphate transaminase activity"/>
    <property type="evidence" value="ECO:0007669"/>
    <property type="project" value="UniProtKB-UniRule"/>
</dbReference>
<dbReference type="GO" id="GO:0030170">
    <property type="term" value="F:pyridoxal phosphate binding"/>
    <property type="evidence" value="ECO:0007669"/>
    <property type="project" value="InterPro"/>
</dbReference>
<dbReference type="GO" id="GO:0000105">
    <property type="term" value="P:L-histidine biosynthetic process"/>
    <property type="evidence" value="ECO:0007669"/>
    <property type="project" value="UniProtKB-UniRule"/>
</dbReference>
<dbReference type="CDD" id="cd00609">
    <property type="entry name" value="AAT_like"/>
    <property type="match status" value="1"/>
</dbReference>
<dbReference type="Gene3D" id="3.90.1150.10">
    <property type="entry name" value="Aspartate Aminotransferase, domain 1"/>
    <property type="match status" value="1"/>
</dbReference>
<dbReference type="Gene3D" id="3.40.640.10">
    <property type="entry name" value="Type I PLP-dependent aspartate aminotransferase-like (Major domain)"/>
    <property type="match status" value="1"/>
</dbReference>
<dbReference type="HAMAP" id="MF_01023">
    <property type="entry name" value="HisC_aminotrans_2"/>
    <property type="match status" value="1"/>
</dbReference>
<dbReference type="InterPro" id="IPR001917">
    <property type="entry name" value="Aminotrans_II_pyridoxalP_BS"/>
</dbReference>
<dbReference type="InterPro" id="IPR004839">
    <property type="entry name" value="Aminotransferase_I/II_large"/>
</dbReference>
<dbReference type="InterPro" id="IPR005861">
    <property type="entry name" value="HisP_aminotrans"/>
</dbReference>
<dbReference type="InterPro" id="IPR015424">
    <property type="entry name" value="PyrdxlP-dep_Trfase"/>
</dbReference>
<dbReference type="InterPro" id="IPR015421">
    <property type="entry name" value="PyrdxlP-dep_Trfase_major"/>
</dbReference>
<dbReference type="InterPro" id="IPR015422">
    <property type="entry name" value="PyrdxlP-dep_Trfase_small"/>
</dbReference>
<dbReference type="NCBIfam" id="TIGR01141">
    <property type="entry name" value="hisC"/>
    <property type="match status" value="1"/>
</dbReference>
<dbReference type="PANTHER" id="PTHR42885:SF2">
    <property type="entry name" value="HISTIDINOL-PHOSPHATE AMINOTRANSFERASE"/>
    <property type="match status" value="1"/>
</dbReference>
<dbReference type="PANTHER" id="PTHR42885">
    <property type="entry name" value="HISTIDINOL-PHOSPHATE AMINOTRANSFERASE-RELATED"/>
    <property type="match status" value="1"/>
</dbReference>
<dbReference type="Pfam" id="PF00155">
    <property type="entry name" value="Aminotran_1_2"/>
    <property type="match status" value="1"/>
</dbReference>
<dbReference type="SUPFAM" id="SSF53383">
    <property type="entry name" value="PLP-dependent transferases"/>
    <property type="match status" value="1"/>
</dbReference>
<dbReference type="PROSITE" id="PS00599">
    <property type="entry name" value="AA_TRANSFER_CLASS_2"/>
    <property type="match status" value="1"/>
</dbReference>